<name>ITR4_MOMCH</name>
<sequence>QGCPRILKQCKQDSECPGECICMAHGFCTI</sequence>
<proteinExistence type="evidence at protein level"/>
<comment type="function">
    <text evidence="2">Inhibits trypsin; probably participates in a plant defense mechanism.</text>
</comment>
<comment type="subcellular location">
    <subcellularLocation>
        <location evidence="6">Secreted</location>
    </subcellularLocation>
</comment>
<comment type="domain">
    <text evidence="1">The presence of a 'disulfide through disulfide knot' structurally defines this protein as a knottin.</text>
</comment>
<comment type="similarity">
    <text evidence="5">Belongs to the protease inhibitor I7 (squash-type serine protease inhibitor) family.</text>
</comment>
<protein>
    <recommendedName>
        <fullName evidence="5">Trypsin inhibitor 4</fullName>
    </recommendedName>
    <alternativeName>
        <fullName evidence="5">MCTI-IIII</fullName>
    </alternativeName>
    <alternativeName>
        <fullName evidence="4">Trypsin Inhibitor McTI</fullName>
    </alternativeName>
</protein>
<reference evidence="5" key="1">
    <citation type="thesis" date="2022" institute="University of Karachi" country="Pakistan">
        <title>Molecular characterization and anticancer activity of proteins from Nigella sativa (Black seeds) and Momordica charantia (Bitter melon seeds) against human breast cancer cell lines.</title>
        <authorList>
            <person name="Khurshid Y."/>
        </authorList>
    </citation>
    <scope>PROTEIN SEQUENCE</scope>
    <source>
        <tissue evidence="4">Seed</tissue>
    </source>
</reference>
<accession>C0HLN1</accession>
<dbReference type="SMR" id="C0HLN1"/>
<dbReference type="Proteomes" id="UP000504603">
    <property type="component" value="Unplaced"/>
</dbReference>
<dbReference type="GO" id="GO:0005576">
    <property type="term" value="C:extracellular region"/>
    <property type="evidence" value="ECO:0007669"/>
    <property type="project" value="UniProtKB-SubCell"/>
</dbReference>
<dbReference type="GO" id="GO:0004867">
    <property type="term" value="F:serine-type endopeptidase inhibitor activity"/>
    <property type="evidence" value="ECO:0007669"/>
    <property type="project" value="UniProtKB-KW"/>
</dbReference>
<dbReference type="CDD" id="cd00150">
    <property type="entry name" value="PlantTI"/>
    <property type="match status" value="1"/>
</dbReference>
<dbReference type="Gene3D" id="4.10.75.20">
    <property type="match status" value="1"/>
</dbReference>
<dbReference type="InterPro" id="IPR000737">
    <property type="entry name" value="Prot_inh_squash"/>
</dbReference>
<dbReference type="InterPro" id="IPR011052">
    <property type="entry name" value="Proteinase_amylase_inhib_sf"/>
</dbReference>
<dbReference type="Pfam" id="PF00299">
    <property type="entry name" value="Squash"/>
    <property type="match status" value="1"/>
</dbReference>
<dbReference type="SMART" id="SM00286">
    <property type="entry name" value="PTI"/>
    <property type="match status" value="1"/>
</dbReference>
<dbReference type="SUPFAM" id="SSF57027">
    <property type="entry name" value="Plant inhibitors of proteinases and amylases"/>
    <property type="match status" value="1"/>
</dbReference>
<evidence type="ECO:0000250" key="1">
    <source>
        <dbReference type="UniProtKB" id="P10295"/>
    </source>
</evidence>
<evidence type="ECO:0000250" key="2">
    <source>
        <dbReference type="UniProtKB" id="P82410"/>
    </source>
</evidence>
<evidence type="ECO:0000250" key="3">
    <source>
        <dbReference type="UniProtKB" id="P83394"/>
    </source>
</evidence>
<evidence type="ECO:0000303" key="4">
    <source ref="1"/>
</evidence>
<evidence type="ECO:0000305" key="5"/>
<evidence type="ECO:0000305" key="6">
    <source ref="1"/>
</evidence>
<organism>
    <name type="scientific">Momordica charantia</name>
    <name type="common">Bitter gourd</name>
    <name type="synonym">Balsam pear</name>
    <dbReference type="NCBI Taxonomy" id="3673"/>
    <lineage>
        <taxon>Eukaryota</taxon>
        <taxon>Viridiplantae</taxon>
        <taxon>Streptophyta</taxon>
        <taxon>Embryophyta</taxon>
        <taxon>Tracheophyta</taxon>
        <taxon>Spermatophyta</taxon>
        <taxon>Magnoliopsida</taxon>
        <taxon>eudicotyledons</taxon>
        <taxon>Gunneridae</taxon>
        <taxon>Pentapetalae</taxon>
        <taxon>rosids</taxon>
        <taxon>fabids</taxon>
        <taxon>Cucurbitales</taxon>
        <taxon>Cucurbitaceae</taxon>
        <taxon>Momordiceae</taxon>
        <taxon>Momordica</taxon>
    </lineage>
</organism>
<feature type="peptide" id="PRO_0000459128" description="Trypsin inhibitor 4">
    <location>
        <begin position="1"/>
        <end position="30"/>
    </location>
</feature>
<feature type="site" description="Reactive bond" evidence="3">
    <location>
        <begin position="5"/>
        <end position="6"/>
    </location>
</feature>
<feature type="disulfide bond" evidence="1">
    <location>
        <begin position="3"/>
        <end position="20"/>
    </location>
</feature>
<feature type="disulfide bond" evidence="1">
    <location>
        <begin position="10"/>
        <end position="22"/>
    </location>
</feature>
<feature type="disulfide bond" evidence="1">
    <location>
        <begin position="16"/>
        <end position="28"/>
    </location>
</feature>
<keyword id="KW-0903">Direct protein sequencing</keyword>
<keyword id="KW-1015">Disulfide bond</keyword>
<keyword id="KW-0960">Knottin</keyword>
<keyword id="KW-0646">Protease inhibitor</keyword>
<keyword id="KW-1185">Reference proteome</keyword>
<keyword id="KW-0964">Secreted</keyword>
<keyword id="KW-0722">Serine protease inhibitor</keyword>